<accession>O29347</accession>
<reference key="1">
    <citation type="journal article" date="1997" name="Nature">
        <title>The complete genome sequence of the hyperthermophilic, sulphate-reducing archaeon Archaeoglobus fulgidus.</title>
        <authorList>
            <person name="Klenk H.-P."/>
            <person name="Clayton R.A."/>
            <person name="Tomb J.-F."/>
            <person name="White O."/>
            <person name="Nelson K.E."/>
            <person name="Ketchum K.A."/>
            <person name="Dodson R.J."/>
            <person name="Gwinn M.L."/>
            <person name="Hickey E.K."/>
            <person name="Peterson J.D."/>
            <person name="Richardson D.L."/>
            <person name="Kerlavage A.R."/>
            <person name="Graham D.E."/>
            <person name="Kyrpides N.C."/>
            <person name="Fleischmann R.D."/>
            <person name="Quackenbush J."/>
            <person name="Lee N.H."/>
            <person name="Sutton G.G."/>
            <person name="Gill S.R."/>
            <person name="Kirkness E.F."/>
            <person name="Dougherty B.A."/>
            <person name="McKenney K."/>
            <person name="Adams M.D."/>
            <person name="Loftus B.J."/>
            <person name="Peterson S.N."/>
            <person name="Reich C.I."/>
            <person name="McNeil L.K."/>
            <person name="Badger J.H."/>
            <person name="Glodek A."/>
            <person name="Zhou L."/>
            <person name="Overbeek R."/>
            <person name="Gocayne J.D."/>
            <person name="Weidman J.F."/>
            <person name="McDonald L.A."/>
            <person name="Utterback T.R."/>
            <person name="Cotton M.D."/>
            <person name="Spriggs T."/>
            <person name="Artiach P."/>
            <person name="Kaine B.P."/>
            <person name="Sykes S.M."/>
            <person name="Sadow P.W."/>
            <person name="D'Andrea K.P."/>
            <person name="Bowman C."/>
            <person name="Fujii C."/>
            <person name="Garland S.A."/>
            <person name="Mason T.M."/>
            <person name="Olsen G.J."/>
            <person name="Fraser C.M."/>
            <person name="Smith H.O."/>
            <person name="Woese C.R."/>
            <person name="Venter J.C."/>
        </authorList>
    </citation>
    <scope>NUCLEOTIDE SEQUENCE [LARGE SCALE GENOMIC DNA]</scope>
    <source>
        <strain>ATCC 49558 / DSM 4304 / JCM 9628 / NBRC 100126 / VC-16</strain>
    </source>
</reference>
<protein>
    <recommendedName>
        <fullName>Uncharacterized protein AF_0915</fullName>
    </recommendedName>
</protein>
<keyword id="KW-1185">Reference proteome</keyword>
<name>Y915_ARCFU</name>
<feature type="chain" id="PRO_0000127945" description="Uncharacterized protein AF_0915">
    <location>
        <begin position="1"/>
        <end position="151"/>
    </location>
</feature>
<proteinExistence type="predicted"/>
<dbReference type="EMBL" id="AE000782">
    <property type="protein sequence ID" value="AAB90329.1"/>
    <property type="molecule type" value="Genomic_DNA"/>
</dbReference>
<dbReference type="PIR" id="C69364">
    <property type="entry name" value="C69364"/>
</dbReference>
<dbReference type="RefSeq" id="WP_010878415.1">
    <property type="nucleotide sequence ID" value="NC_000917.1"/>
</dbReference>
<dbReference type="SMR" id="O29347"/>
<dbReference type="STRING" id="224325.AF_0915"/>
<dbReference type="PaxDb" id="224325-AF_0915"/>
<dbReference type="EnsemblBacteria" id="AAB90329">
    <property type="protein sequence ID" value="AAB90329"/>
    <property type="gene ID" value="AF_0915"/>
</dbReference>
<dbReference type="KEGG" id="afu:AF_0915"/>
<dbReference type="eggNOG" id="arCOG10389">
    <property type="taxonomic scope" value="Archaea"/>
</dbReference>
<dbReference type="HOGENOM" id="CLU_129910_0_0_2"/>
<dbReference type="OrthoDB" id="383433at2157"/>
<dbReference type="Proteomes" id="UP000002199">
    <property type="component" value="Chromosome"/>
</dbReference>
<sequence length="151" mass="17798">MDRKKVVEWWVDRLLINYPVKPVFEVVSFLQEAAEKIVDRALSLYEGKSVDLSDAVDDIMRFLATDRNFGPGDSIRLFCELRDFMADELNLKAEDRLKFGRKFEEILFTAFDAYMACREKIFELRLKEKEADLEMMRKIMDYASRSLSSQD</sequence>
<organism>
    <name type="scientific">Archaeoglobus fulgidus (strain ATCC 49558 / DSM 4304 / JCM 9628 / NBRC 100126 / VC-16)</name>
    <dbReference type="NCBI Taxonomy" id="224325"/>
    <lineage>
        <taxon>Archaea</taxon>
        <taxon>Methanobacteriati</taxon>
        <taxon>Methanobacteriota</taxon>
        <taxon>Archaeoglobi</taxon>
        <taxon>Archaeoglobales</taxon>
        <taxon>Archaeoglobaceae</taxon>
        <taxon>Archaeoglobus</taxon>
    </lineage>
</organism>
<gene>
    <name type="ordered locus">AF_0915</name>
</gene>